<accession>Q03342</accession>
<keyword id="KW-0067">ATP-binding</keyword>
<keyword id="KW-0963">Cytoplasm</keyword>
<keyword id="KW-0206">Cytoskeleton</keyword>
<keyword id="KW-0378">Hydrolase</keyword>
<keyword id="KW-0547">Nucleotide-binding</keyword>
<reference key="1">
    <citation type="journal article" date="1993" name="Mol. Biochem. Parasitol.">
        <title>Molecular cloning and characterization of actin genes from Echinococcus granulosus.</title>
        <authorList>
            <person name="da Silva C.M."/>
            <person name="Ferreira H.B."/>
            <person name="Picon M."/>
            <person name="Gorfinkiel N."/>
            <person name="Ehrlich R."/>
            <person name="Zaha A."/>
        </authorList>
    </citation>
    <scope>NUCLEOTIDE SEQUENCE [MRNA]</scope>
</reference>
<evidence type="ECO:0000250" key="1">
    <source>
        <dbReference type="UniProtKB" id="P68137"/>
    </source>
</evidence>
<evidence type="ECO:0000305" key="2"/>
<dbReference type="EC" id="3.6.4.-" evidence="1"/>
<dbReference type="EMBL" id="L07775">
    <property type="protein sequence ID" value="AAC37175.1"/>
    <property type="molecule type" value="mRNA"/>
</dbReference>
<dbReference type="SMR" id="Q03342"/>
<dbReference type="OrthoDB" id="10249208at2759"/>
<dbReference type="Proteomes" id="UP000492820">
    <property type="component" value="Unplaced"/>
</dbReference>
<dbReference type="GO" id="GO:0005737">
    <property type="term" value="C:cytoplasm"/>
    <property type="evidence" value="ECO:0007669"/>
    <property type="project" value="UniProtKB-KW"/>
</dbReference>
<dbReference type="GO" id="GO:0005856">
    <property type="term" value="C:cytoskeleton"/>
    <property type="evidence" value="ECO:0007669"/>
    <property type="project" value="UniProtKB-SubCell"/>
</dbReference>
<dbReference type="GO" id="GO:0005524">
    <property type="term" value="F:ATP binding"/>
    <property type="evidence" value="ECO:0007669"/>
    <property type="project" value="UniProtKB-KW"/>
</dbReference>
<dbReference type="GO" id="GO:0016787">
    <property type="term" value="F:hydrolase activity"/>
    <property type="evidence" value="ECO:0007669"/>
    <property type="project" value="UniProtKB-KW"/>
</dbReference>
<dbReference type="FunFam" id="3.30.420.40:FF:000080">
    <property type="entry name" value="Actin, alpha skeletal muscle"/>
    <property type="match status" value="1"/>
</dbReference>
<dbReference type="FunFam" id="3.30.420.40:FF:000131">
    <property type="entry name" value="Actin, alpha skeletal muscle"/>
    <property type="match status" value="1"/>
</dbReference>
<dbReference type="FunFam" id="3.90.640.10:FF:000047">
    <property type="entry name" value="Actin, alpha skeletal muscle"/>
    <property type="match status" value="1"/>
</dbReference>
<dbReference type="FunFam" id="3.30.420.40:FF:000058">
    <property type="entry name" value="Putative actin-related protein 5"/>
    <property type="match status" value="1"/>
</dbReference>
<dbReference type="Gene3D" id="3.30.420.40">
    <property type="match status" value="2"/>
</dbReference>
<dbReference type="Gene3D" id="3.90.640.10">
    <property type="entry name" value="Actin, Chain A, domain 4"/>
    <property type="match status" value="1"/>
</dbReference>
<dbReference type="InterPro" id="IPR004000">
    <property type="entry name" value="Actin"/>
</dbReference>
<dbReference type="InterPro" id="IPR020902">
    <property type="entry name" value="Actin/actin-like_CS"/>
</dbReference>
<dbReference type="InterPro" id="IPR004001">
    <property type="entry name" value="Actin_CS"/>
</dbReference>
<dbReference type="InterPro" id="IPR043129">
    <property type="entry name" value="ATPase_NBD"/>
</dbReference>
<dbReference type="PANTHER" id="PTHR11937">
    <property type="entry name" value="ACTIN"/>
    <property type="match status" value="1"/>
</dbReference>
<dbReference type="Pfam" id="PF00022">
    <property type="entry name" value="Actin"/>
    <property type="match status" value="1"/>
</dbReference>
<dbReference type="PRINTS" id="PR00190">
    <property type="entry name" value="ACTIN"/>
</dbReference>
<dbReference type="SMART" id="SM00268">
    <property type="entry name" value="ACTIN"/>
    <property type="match status" value="1"/>
</dbReference>
<dbReference type="SUPFAM" id="SSF53067">
    <property type="entry name" value="Actin-like ATPase domain"/>
    <property type="match status" value="2"/>
</dbReference>
<dbReference type="PROSITE" id="PS00432">
    <property type="entry name" value="ACTINS_2"/>
    <property type="match status" value="1"/>
</dbReference>
<dbReference type="PROSITE" id="PS01132">
    <property type="entry name" value="ACTINS_ACT_LIKE"/>
    <property type="match status" value="1"/>
</dbReference>
<proteinExistence type="evidence at transcript level"/>
<organism>
    <name type="scientific">Echinococcus granulosus</name>
    <name type="common">Hydatid tapeworm</name>
    <dbReference type="NCBI Taxonomy" id="6210"/>
    <lineage>
        <taxon>Eukaryota</taxon>
        <taxon>Metazoa</taxon>
        <taxon>Spiralia</taxon>
        <taxon>Lophotrochozoa</taxon>
        <taxon>Platyhelminthes</taxon>
        <taxon>Cestoda</taxon>
        <taxon>Eucestoda</taxon>
        <taxon>Cyclophyllidea</taxon>
        <taxon>Taeniidae</taxon>
        <taxon>Echinococcus</taxon>
        <taxon>Echinococcus granulosus group</taxon>
    </lineage>
</organism>
<feature type="chain" id="PRO_0000088935" description="Actin-3">
    <location>
        <begin position="1" status="less than"/>
        <end position="309"/>
    </location>
</feature>
<feature type="non-terminal residue">
    <location>
        <position position="1"/>
    </location>
</feature>
<protein>
    <recommendedName>
        <fullName>Actin-3</fullName>
        <ecNumber evidence="1">3.6.4.-</ecNumber>
    </recommendedName>
</protein>
<comment type="function">
    <text>Actins are highly conserved proteins that are involved in various types of cell motility and are ubiquitously expressed in all eukaryotic cells.</text>
</comment>
<comment type="catalytic activity">
    <reaction evidence="1">
        <text>ATP + H2O = ADP + phosphate + H(+)</text>
        <dbReference type="Rhea" id="RHEA:13065"/>
        <dbReference type="ChEBI" id="CHEBI:15377"/>
        <dbReference type="ChEBI" id="CHEBI:15378"/>
        <dbReference type="ChEBI" id="CHEBI:30616"/>
        <dbReference type="ChEBI" id="CHEBI:43474"/>
        <dbReference type="ChEBI" id="CHEBI:456216"/>
    </reaction>
</comment>
<comment type="subcellular location">
    <subcellularLocation>
        <location>Cytoplasm</location>
        <location>Cytoskeleton</location>
    </subcellularLocation>
</comment>
<comment type="similarity">
    <text evidence="2">Belongs to the actin family.</text>
</comment>
<gene>
    <name type="primary">ACTIII</name>
</gene>
<sequence>LKYPIEHGIVTNWDDMEKIWHHTFYNELRVAPEEHPVLLTEAPLNPKANREKMTQIMFETFNCPAMYVAIQAVLSLYASGRTTGIVLDSGDGVTHTVPIYEGYALPHAILRLDLAGRDLTDYLMKILTERGYSFTTTVEREIVRDIKEKLCYVALDFEQEMATAASSSSLEKSYELPDGQVITIGNERFRCPEALYQPSFLGMEAVGIHETTFNSIMKCDVDIRKDLYANTVLSGGSTMYPGIADRMQKEITALAPSTMKIKIVAPPDGKYSVWIGGSILASLSTFHEMWISKQEYDESGPSIVHRKCF</sequence>
<name>ACT3_ECHGR</name>